<dbReference type="EMBL" id="CH480816">
    <property type="protein sequence ID" value="EDW48059.1"/>
    <property type="molecule type" value="Genomic_DNA"/>
</dbReference>
<dbReference type="SMR" id="B4HSI1"/>
<dbReference type="STRING" id="7238.B4HSI1"/>
<dbReference type="EnsemblMetazoa" id="FBtr0203085">
    <property type="protein sequence ID" value="FBpp0201577"/>
    <property type="gene ID" value="FBgn0174983"/>
</dbReference>
<dbReference type="EnsemblMetazoa" id="XM_002034010.2">
    <property type="protein sequence ID" value="XP_002034046.1"/>
    <property type="gene ID" value="LOC6609357"/>
</dbReference>
<dbReference type="GeneID" id="6609357"/>
<dbReference type="KEGG" id="dse:6609357"/>
<dbReference type="CTD" id="51506"/>
<dbReference type="HOGENOM" id="CLU_101170_0_0_1"/>
<dbReference type="OMA" id="LWQKNVP"/>
<dbReference type="OrthoDB" id="407at7215"/>
<dbReference type="PhylomeDB" id="B4HSI1"/>
<dbReference type="Proteomes" id="UP000001292">
    <property type="component" value="Unassembled WGS sequence"/>
</dbReference>
<dbReference type="GO" id="GO:0005737">
    <property type="term" value="C:cytoplasm"/>
    <property type="evidence" value="ECO:0007669"/>
    <property type="project" value="TreeGrafter"/>
</dbReference>
<dbReference type="GO" id="GO:0061657">
    <property type="term" value="F:UFM1 conjugating enzyme activity"/>
    <property type="evidence" value="ECO:0007669"/>
    <property type="project" value="InterPro"/>
</dbReference>
<dbReference type="GO" id="GO:1990592">
    <property type="term" value="P:protein K69-linked ufmylation"/>
    <property type="evidence" value="ECO:0007669"/>
    <property type="project" value="TreeGrafter"/>
</dbReference>
<dbReference type="CDD" id="cd11686">
    <property type="entry name" value="UBCc_UFC1"/>
    <property type="match status" value="1"/>
</dbReference>
<dbReference type="FunFam" id="3.10.110.10:FF:000042">
    <property type="entry name" value="Ubiquitin-fold modifier-conjugating enzyme 1"/>
    <property type="match status" value="1"/>
</dbReference>
<dbReference type="Gene3D" id="3.10.110.10">
    <property type="entry name" value="Ubiquitin Conjugating Enzyme"/>
    <property type="match status" value="1"/>
</dbReference>
<dbReference type="InterPro" id="IPR016135">
    <property type="entry name" value="UBQ-conjugating_enzyme/RWD"/>
</dbReference>
<dbReference type="InterPro" id="IPR014806">
    <property type="entry name" value="Ufc1"/>
</dbReference>
<dbReference type="PANTHER" id="PTHR12921">
    <property type="entry name" value="UBIQUITIN-FOLD MODIFIER-CONJUGATING ENZYME 1"/>
    <property type="match status" value="1"/>
</dbReference>
<dbReference type="PANTHER" id="PTHR12921:SF0">
    <property type="entry name" value="UBIQUITIN-FOLD MODIFIER-CONJUGATING ENZYME 1"/>
    <property type="match status" value="1"/>
</dbReference>
<dbReference type="Pfam" id="PF08694">
    <property type="entry name" value="UFC1"/>
    <property type="match status" value="1"/>
</dbReference>
<dbReference type="PIRSF" id="PIRSF008716">
    <property type="entry name" value="DUF1782"/>
    <property type="match status" value="1"/>
</dbReference>
<dbReference type="SUPFAM" id="SSF54495">
    <property type="entry name" value="UBC-like"/>
    <property type="match status" value="1"/>
</dbReference>
<feature type="chain" id="PRO_0000391974" description="Ubiquitin-fold modifier-conjugating enzyme 1">
    <location>
        <begin position="1"/>
        <end position="164"/>
    </location>
</feature>
<feature type="active site" description="Glycyl thioester intermediate" evidence="1">
    <location>
        <position position="116"/>
    </location>
</feature>
<name>UFC1_DROSE</name>
<evidence type="ECO:0000250" key="1"/>
<evidence type="ECO:0000305" key="2"/>
<reference key="1">
    <citation type="journal article" date="2007" name="Nature">
        <title>Evolution of genes and genomes on the Drosophila phylogeny.</title>
        <authorList>
            <consortium name="Drosophila 12 genomes consortium"/>
        </authorList>
    </citation>
    <scope>NUCLEOTIDE SEQUENCE [LARGE SCALE GENOMIC DNA]</scope>
    <source>
        <strain>Rob3c / Tucson 14021-0248.25</strain>
    </source>
</reference>
<keyword id="KW-1185">Reference proteome</keyword>
<keyword id="KW-0833">Ubl conjugation pathway</keyword>
<comment type="function">
    <text evidence="1">E2-like enzyme which forms an intermediate with UFM1 via a thioester linkage.</text>
</comment>
<comment type="similarity">
    <text evidence="2">Belongs to the ubiquitin-conjugating enzyme family. UFC1 subfamily.</text>
</comment>
<accession>B4HSI1</accession>
<proteinExistence type="inferred from homology"/>
<sequence length="164" mass="19018">MVDDSTRKTLSNIPLLQIRAGPREKDVWVQRLKEEYQALIKYVENNKQSGSDWFRLESNKEGTKWFGKCWYMHNLLKYEFEVEFDIPVTYPTTAPEIALPELDGKTAKMYRGGKICLTDHFKPLWARNVPKFGIAHAMALGLAPWLAVEIPDLIEKGIITYKEK</sequence>
<gene>
    <name type="ORF">GM20100</name>
</gene>
<protein>
    <recommendedName>
        <fullName>Ubiquitin-fold modifier-conjugating enzyme 1</fullName>
    </recommendedName>
    <alternativeName>
        <fullName>Ufm1-conjugating enzyme 1</fullName>
    </alternativeName>
</protein>
<organism>
    <name type="scientific">Drosophila sechellia</name>
    <name type="common">Fruit fly</name>
    <dbReference type="NCBI Taxonomy" id="7238"/>
    <lineage>
        <taxon>Eukaryota</taxon>
        <taxon>Metazoa</taxon>
        <taxon>Ecdysozoa</taxon>
        <taxon>Arthropoda</taxon>
        <taxon>Hexapoda</taxon>
        <taxon>Insecta</taxon>
        <taxon>Pterygota</taxon>
        <taxon>Neoptera</taxon>
        <taxon>Endopterygota</taxon>
        <taxon>Diptera</taxon>
        <taxon>Brachycera</taxon>
        <taxon>Muscomorpha</taxon>
        <taxon>Ephydroidea</taxon>
        <taxon>Drosophilidae</taxon>
        <taxon>Drosophila</taxon>
        <taxon>Sophophora</taxon>
    </lineage>
</organism>